<keyword id="KW-0210">Decarboxylase</keyword>
<keyword id="KW-0456">Lyase</keyword>
<keyword id="KW-0665">Pyrimidine biosynthesis</keyword>
<keyword id="KW-1185">Reference proteome</keyword>
<reference key="1">
    <citation type="submission" date="2006-02" db="EMBL/GenBank/DDBJ databases">
        <title>Complete sequence of chromosome of Jannaschia sp. CCS1.</title>
        <authorList>
            <consortium name="US DOE Joint Genome Institute"/>
            <person name="Copeland A."/>
            <person name="Lucas S."/>
            <person name="Lapidus A."/>
            <person name="Barry K."/>
            <person name="Detter J.C."/>
            <person name="Glavina del Rio T."/>
            <person name="Hammon N."/>
            <person name="Israni S."/>
            <person name="Pitluck S."/>
            <person name="Brettin T."/>
            <person name="Bruce D."/>
            <person name="Han C."/>
            <person name="Tapia R."/>
            <person name="Gilna P."/>
            <person name="Chertkov O."/>
            <person name="Saunders E."/>
            <person name="Schmutz J."/>
            <person name="Larimer F."/>
            <person name="Land M."/>
            <person name="Kyrpides N."/>
            <person name="Lykidis A."/>
            <person name="Moran M.A."/>
            <person name="Belas R."/>
            <person name="Ye W."/>
            <person name="Buchan A."/>
            <person name="Gonzalez J.M."/>
            <person name="Schell M.A."/>
            <person name="Richardson P."/>
        </authorList>
    </citation>
    <scope>NUCLEOTIDE SEQUENCE [LARGE SCALE GENOMIC DNA]</scope>
    <source>
        <strain>CCS1</strain>
    </source>
</reference>
<comment type="function">
    <text evidence="1">Catalyzes the decarboxylation of orotidine 5'-monophosphate (OMP) to uridine 5'-monophosphate (UMP).</text>
</comment>
<comment type="catalytic activity">
    <reaction evidence="1">
        <text>orotidine 5'-phosphate + H(+) = UMP + CO2</text>
        <dbReference type="Rhea" id="RHEA:11596"/>
        <dbReference type="ChEBI" id="CHEBI:15378"/>
        <dbReference type="ChEBI" id="CHEBI:16526"/>
        <dbReference type="ChEBI" id="CHEBI:57538"/>
        <dbReference type="ChEBI" id="CHEBI:57865"/>
        <dbReference type="EC" id="4.1.1.23"/>
    </reaction>
</comment>
<comment type="pathway">
    <text evidence="1">Pyrimidine metabolism; UMP biosynthesis via de novo pathway; UMP from orotate: step 2/2.</text>
</comment>
<comment type="subunit">
    <text evidence="1">Homodimer.</text>
</comment>
<comment type="similarity">
    <text evidence="1">Belongs to the OMP decarboxylase family. Type 1 subfamily.</text>
</comment>
<feature type="chain" id="PRO_0000241867" description="Orotidine 5'-phosphate decarboxylase">
    <location>
        <begin position="1"/>
        <end position="229"/>
    </location>
</feature>
<feature type="active site" description="Proton donor" evidence="1">
    <location>
        <position position="63"/>
    </location>
</feature>
<feature type="binding site" evidence="1">
    <location>
        <position position="11"/>
    </location>
    <ligand>
        <name>substrate</name>
    </ligand>
</feature>
<feature type="binding site" evidence="1">
    <location>
        <position position="33"/>
    </location>
    <ligand>
        <name>substrate</name>
    </ligand>
</feature>
<feature type="binding site" evidence="1">
    <location>
        <begin position="61"/>
        <end position="70"/>
    </location>
    <ligand>
        <name>substrate</name>
    </ligand>
</feature>
<feature type="binding site" evidence="1">
    <location>
        <position position="116"/>
    </location>
    <ligand>
        <name>substrate</name>
    </ligand>
</feature>
<feature type="binding site" evidence="1">
    <location>
        <position position="179"/>
    </location>
    <ligand>
        <name>substrate</name>
    </ligand>
</feature>
<feature type="binding site" evidence="1">
    <location>
        <position position="188"/>
    </location>
    <ligand>
        <name>substrate</name>
    </ligand>
</feature>
<feature type="binding site" evidence="1">
    <location>
        <position position="208"/>
    </location>
    <ligand>
        <name>substrate</name>
    </ligand>
</feature>
<feature type="binding site" evidence="1">
    <location>
        <position position="209"/>
    </location>
    <ligand>
        <name>substrate</name>
    </ligand>
</feature>
<sequence length="229" mass="24215">MSDDRLIVALDVPNVVQGLALAEKLGDAVSFYKIGLGMLTGGGLALANELKQDHGKRIFLDMKLFDISATVEAAVRGLAQFNLDFLTVHGDPHVVRAAKEGAAGSDTKILAVTILTSLDRTDLDDCLIRDGEMLDLVAERAGRAFEAGADGVISSPHEATMIRALPEAKGRLIVTPGVRPTGSASGDQKRIATPRQAIADGADHIVVGRPIWQHQDPRAAAQMVVADLP</sequence>
<dbReference type="EC" id="4.1.1.23" evidence="1"/>
<dbReference type="EMBL" id="CP000264">
    <property type="protein sequence ID" value="ABD56906.1"/>
    <property type="molecule type" value="Genomic_DNA"/>
</dbReference>
<dbReference type="RefSeq" id="WP_011457103.1">
    <property type="nucleotide sequence ID" value="NC_007802.1"/>
</dbReference>
<dbReference type="SMR" id="Q28K56"/>
<dbReference type="STRING" id="290400.Jann_3989"/>
<dbReference type="KEGG" id="jan:Jann_3989"/>
<dbReference type="eggNOG" id="COG0284">
    <property type="taxonomic scope" value="Bacteria"/>
</dbReference>
<dbReference type="HOGENOM" id="CLU_067069_1_0_5"/>
<dbReference type="OrthoDB" id="9806203at2"/>
<dbReference type="UniPathway" id="UPA00070">
    <property type="reaction ID" value="UER00120"/>
</dbReference>
<dbReference type="Proteomes" id="UP000008326">
    <property type="component" value="Chromosome"/>
</dbReference>
<dbReference type="GO" id="GO:0005829">
    <property type="term" value="C:cytosol"/>
    <property type="evidence" value="ECO:0007669"/>
    <property type="project" value="TreeGrafter"/>
</dbReference>
<dbReference type="GO" id="GO:0004590">
    <property type="term" value="F:orotidine-5'-phosphate decarboxylase activity"/>
    <property type="evidence" value="ECO:0007669"/>
    <property type="project" value="UniProtKB-UniRule"/>
</dbReference>
<dbReference type="GO" id="GO:0006207">
    <property type="term" value="P:'de novo' pyrimidine nucleobase biosynthetic process"/>
    <property type="evidence" value="ECO:0007669"/>
    <property type="project" value="InterPro"/>
</dbReference>
<dbReference type="GO" id="GO:0044205">
    <property type="term" value="P:'de novo' UMP biosynthetic process"/>
    <property type="evidence" value="ECO:0007669"/>
    <property type="project" value="UniProtKB-UniRule"/>
</dbReference>
<dbReference type="CDD" id="cd04725">
    <property type="entry name" value="OMP_decarboxylase_like"/>
    <property type="match status" value="1"/>
</dbReference>
<dbReference type="Gene3D" id="3.20.20.70">
    <property type="entry name" value="Aldolase class I"/>
    <property type="match status" value="1"/>
</dbReference>
<dbReference type="HAMAP" id="MF_01200_B">
    <property type="entry name" value="OMPdecase_type1_B"/>
    <property type="match status" value="1"/>
</dbReference>
<dbReference type="InterPro" id="IPR013785">
    <property type="entry name" value="Aldolase_TIM"/>
</dbReference>
<dbReference type="InterPro" id="IPR014732">
    <property type="entry name" value="OMPdecase"/>
</dbReference>
<dbReference type="InterPro" id="IPR047596">
    <property type="entry name" value="OMPdecase_bac"/>
</dbReference>
<dbReference type="InterPro" id="IPR001754">
    <property type="entry name" value="OMPdeCOase_dom"/>
</dbReference>
<dbReference type="InterPro" id="IPR011060">
    <property type="entry name" value="RibuloseP-bd_barrel"/>
</dbReference>
<dbReference type="NCBIfam" id="NF001273">
    <property type="entry name" value="PRK00230.1"/>
    <property type="match status" value="1"/>
</dbReference>
<dbReference type="NCBIfam" id="TIGR01740">
    <property type="entry name" value="pyrF"/>
    <property type="match status" value="1"/>
</dbReference>
<dbReference type="PANTHER" id="PTHR32119">
    <property type="entry name" value="OROTIDINE 5'-PHOSPHATE DECARBOXYLASE"/>
    <property type="match status" value="1"/>
</dbReference>
<dbReference type="PANTHER" id="PTHR32119:SF2">
    <property type="entry name" value="OROTIDINE 5'-PHOSPHATE DECARBOXYLASE"/>
    <property type="match status" value="1"/>
</dbReference>
<dbReference type="Pfam" id="PF00215">
    <property type="entry name" value="OMPdecase"/>
    <property type="match status" value="1"/>
</dbReference>
<dbReference type="SMART" id="SM00934">
    <property type="entry name" value="OMPdecase"/>
    <property type="match status" value="1"/>
</dbReference>
<dbReference type="SUPFAM" id="SSF51366">
    <property type="entry name" value="Ribulose-phoshate binding barrel"/>
    <property type="match status" value="1"/>
</dbReference>
<organism>
    <name type="scientific">Jannaschia sp. (strain CCS1)</name>
    <dbReference type="NCBI Taxonomy" id="290400"/>
    <lineage>
        <taxon>Bacteria</taxon>
        <taxon>Pseudomonadati</taxon>
        <taxon>Pseudomonadota</taxon>
        <taxon>Alphaproteobacteria</taxon>
        <taxon>Rhodobacterales</taxon>
        <taxon>Roseobacteraceae</taxon>
        <taxon>Jannaschia</taxon>
    </lineage>
</organism>
<proteinExistence type="inferred from homology"/>
<evidence type="ECO:0000255" key="1">
    <source>
        <dbReference type="HAMAP-Rule" id="MF_01200"/>
    </source>
</evidence>
<gene>
    <name evidence="1" type="primary">pyrF</name>
    <name type="ordered locus">Jann_3989</name>
</gene>
<accession>Q28K56</accession>
<name>PYRF_JANSC</name>
<protein>
    <recommendedName>
        <fullName evidence="1">Orotidine 5'-phosphate decarboxylase</fullName>
        <ecNumber evidence="1">4.1.1.23</ecNumber>
    </recommendedName>
    <alternativeName>
        <fullName evidence="1">OMP decarboxylase</fullName>
        <shortName evidence="1">OMPDCase</shortName>
        <shortName evidence="1">OMPdecase</shortName>
    </alternativeName>
</protein>